<protein>
    <recommendedName>
        <fullName evidence="1">PF03932 family protein CutC</fullName>
    </recommendedName>
</protein>
<dbReference type="EMBL" id="CU928161">
    <property type="protein sequence ID" value="CAR03235.1"/>
    <property type="molecule type" value="Genomic_DNA"/>
</dbReference>
<dbReference type="RefSeq" id="WP_001185753.1">
    <property type="nucleotide sequence ID" value="NC_011742.1"/>
</dbReference>
<dbReference type="SMR" id="B7MBT3"/>
<dbReference type="KEGG" id="ecz:ECS88_1932"/>
<dbReference type="HOGENOM" id="CLU_050555_3_1_6"/>
<dbReference type="Proteomes" id="UP000000747">
    <property type="component" value="Chromosome"/>
</dbReference>
<dbReference type="GO" id="GO:0005737">
    <property type="term" value="C:cytoplasm"/>
    <property type="evidence" value="ECO:0007669"/>
    <property type="project" value="UniProtKB-SubCell"/>
</dbReference>
<dbReference type="GO" id="GO:0005507">
    <property type="term" value="F:copper ion binding"/>
    <property type="evidence" value="ECO:0007669"/>
    <property type="project" value="TreeGrafter"/>
</dbReference>
<dbReference type="FunFam" id="3.20.20.380:FF:000001">
    <property type="entry name" value="Copper homeostasis protein CutC"/>
    <property type="match status" value="1"/>
</dbReference>
<dbReference type="Gene3D" id="3.20.20.380">
    <property type="entry name" value="Copper homeostasis (CutC) domain"/>
    <property type="match status" value="1"/>
</dbReference>
<dbReference type="HAMAP" id="MF_00795">
    <property type="entry name" value="CutC"/>
    <property type="match status" value="1"/>
</dbReference>
<dbReference type="InterPro" id="IPR005627">
    <property type="entry name" value="CutC-like"/>
</dbReference>
<dbReference type="InterPro" id="IPR036822">
    <property type="entry name" value="CutC-like_dom_sf"/>
</dbReference>
<dbReference type="NCBIfam" id="NF008603">
    <property type="entry name" value="PRK11572.1"/>
    <property type="match status" value="1"/>
</dbReference>
<dbReference type="PANTHER" id="PTHR12598">
    <property type="entry name" value="COPPER HOMEOSTASIS PROTEIN CUTC"/>
    <property type="match status" value="1"/>
</dbReference>
<dbReference type="PANTHER" id="PTHR12598:SF0">
    <property type="entry name" value="COPPER HOMEOSTASIS PROTEIN CUTC HOMOLOG"/>
    <property type="match status" value="1"/>
</dbReference>
<dbReference type="Pfam" id="PF03932">
    <property type="entry name" value="CutC"/>
    <property type="match status" value="1"/>
</dbReference>
<dbReference type="SUPFAM" id="SSF110395">
    <property type="entry name" value="CutC-like"/>
    <property type="match status" value="1"/>
</dbReference>
<organism>
    <name type="scientific">Escherichia coli O45:K1 (strain S88 / ExPEC)</name>
    <dbReference type="NCBI Taxonomy" id="585035"/>
    <lineage>
        <taxon>Bacteria</taxon>
        <taxon>Pseudomonadati</taxon>
        <taxon>Pseudomonadota</taxon>
        <taxon>Gammaproteobacteria</taxon>
        <taxon>Enterobacterales</taxon>
        <taxon>Enterobacteriaceae</taxon>
        <taxon>Escherichia</taxon>
    </lineage>
</organism>
<name>CUTC_ECO45</name>
<feature type="chain" id="PRO_1000133830" description="PF03932 family protein CutC">
    <location>
        <begin position="1"/>
        <end position="248"/>
    </location>
</feature>
<evidence type="ECO:0000255" key="1">
    <source>
        <dbReference type="HAMAP-Rule" id="MF_00795"/>
    </source>
</evidence>
<proteinExistence type="inferred from homology"/>
<reference key="1">
    <citation type="journal article" date="2009" name="PLoS Genet.">
        <title>Organised genome dynamics in the Escherichia coli species results in highly diverse adaptive paths.</title>
        <authorList>
            <person name="Touchon M."/>
            <person name="Hoede C."/>
            <person name="Tenaillon O."/>
            <person name="Barbe V."/>
            <person name="Baeriswyl S."/>
            <person name="Bidet P."/>
            <person name="Bingen E."/>
            <person name="Bonacorsi S."/>
            <person name="Bouchier C."/>
            <person name="Bouvet O."/>
            <person name="Calteau A."/>
            <person name="Chiapello H."/>
            <person name="Clermont O."/>
            <person name="Cruveiller S."/>
            <person name="Danchin A."/>
            <person name="Diard M."/>
            <person name="Dossat C."/>
            <person name="Karoui M.E."/>
            <person name="Frapy E."/>
            <person name="Garry L."/>
            <person name="Ghigo J.M."/>
            <person name="Gilles A.M."/>
            <person name="Johnson J."/>
            <person name="Le Bouguenec C."/>
            <person name="Lescat M."/>
            <person name="Mangenot S."/>
            <person name="Martinez-Jehanne V."/>
            <person name="Matic I."/>
            <person name="Nassif X."/>
            <person name="Oztas S."/>
            <person name="Petit M.A."/>
            <person name="Pichon C."/>
            <person name="Rouy Z."/>
            <person name="Ruf C.S."/>
            <person name="Schneider D."/>
            <person name="Tourret J."/>
            <person name="Vacherie B."/>
            <person name="Vallenet D."/>
            <person name="Medigue C."/>
            <person name="Rocha E.P.C."/>
            <person name="Denamur E."/>
        </authorList>
    </citation>
    <scope>NUCLEOTIDE SEQUENCE [LARGE SCALE GENOMIC DNA]</scope>
    <source>
        <strain>S88 / ExPEC</strain>
    </source>
</reference>
<comment type="subunit">
    <text evidence="1">Homodimer.</text>
</comment>
<comment type="subcellular location">
    <subcellularLocation>
        <location evidence="1">Cytoplasm</location>
    </subcellularLocation>
</comment>
<comment type="similarity">
    <text evidence="1">Belongs to the CutC family.</text>
</comment>
<comment type="caution">
    <text evidence="1">Once thought to be involved in copper homeostasis, experiments in E.coli have shown this is not the case.</text>
</comment>
<sequence>MALLEICCYSMECALTAQQNGADRVELCAAPKEGGLTPSLGVLKSVRQRVTIPVHPIIRPRGGDFCYSDGEFAAILEDVRTVRELGFPGLVTGVLEVDGNVDMPRMEKIMAAAGPLAVTFHRAFDMCANPLNTLNNLTELGITRVLTSGQKSDALQGLSKIMELIAHRDAPIIMAGAGVRAENLHHFLDAGVLEVHSSAGAWQASPMRYRNQGLSMSSDAHADEYLRYVVDGAAVAEMKGIIERHQAK</sequence>
<gene>
    <name evidence="1" type="primary">cutC</name>
    <name type="ordered locus">ECS88_1932</name>
</gene>
<keyword id="KW-0963">Cytoplasm</keyword>
<keyword id="KW-1185">Reference proteome</keyword>
<accession>B7MBT3</accession>